<evidence type="ECO:0000255" key="1">
    <source>
        <dbReference type="HAMAP-Rule" id="MF_00086"/>
    </source>
</evidence>
<dbReference type="EC" id="2.5.1.6" evidence="1"/>
<dbReference type="EMBL" id="CP000627">
    <property type="protein sequence ID" value="ABQ19964.1"/>
    <property type="molecule type" value="Genomic_DNA"/>
</dbReference>
<dbReference type="EMBL" id="CP001235">
    <property type="protein sequence ID" value="ACP08535.1"/>
    <property type="molecule type" value="Genomic_DNA"/>
</dbReference>
<dbReference type="RefSeq" id="WP_000985183.1">
    <property type="nucleotide sequence ID" value="NZ_JAACZH010000015.1"/>
</dbReference>
<dbReference type="SMR" id="A5F9H4"/>
<dbReference type="GeneID" id="89515371"/>
<dbReference type="KEGG" id="vco:VC0395_A0024"/>
<dbReference type="KEGG" id="vcr:VC395_0516"/>
<dbReference type="PATRIC" id="fig|345073.21.peg.503"/>
<dbReference type="eggNOG" id="COG0192">
    <property type="taxonomic scope" value="Bacteria"/>
</dbReference>
<dbReference type="HOGENOM" id="CLU_041802_1_1_6"/>
<dbReference type="OrthoDB" id="9801686at2"/>
<dbReference type="UniPathway" id="UPA00315">
    <property type="reaction ID" value="UER00080"/>
</dbReference>
<dbReference type="Proteomes" id="UP000000249">
    <property type="component" value="Chromosome 2"/>
</dbReference>
<dbReference type="GO" id="GO:0005737">
    <property type="term" value="C:cytoplasm"/>
    <property type="evidence" value="ECO:0007669"/>
    <property type="project" value="UniProtKB-SubCell"/>
</dbReference>
<dbReference type="GO" id="GO:0005524">
    <property type="term" value="F:ATP binding"/>
    <property type="evidence" value="ECO:0007669"/>
    <property type="project" value="UniProtKB-UniRule"/>
</dbReference>
<dbReference type="GO" id="GO:0000287">
    <property type="term" value="F:magnesium ion binding"/>
    <property type="evidence" value="ECO:0007669"/>
    <property type="project" value="UniProtKB-UniRule"/>
</dbReference>
<dbReference type="GO" id="GO:0004478">
    <property type="term" value="F:methionine adenosyltransferase activity"/>
    <property type="evidence" value="ECO:0007669"/>
    <property type="project" value="UniProtKB-UniRule"/>
</dbReference>
<dbReference type="GO" id="GO:0006730">
    <property type="term" value="P:one-carbon metabolic process"/>
    <property type="evidence" value="ECO:0007669"/>
    <property type="project" value="UniProtKB-KW"/>
</dbReference>
<dbReference type="GO" id="GO:0006556">
    <property type="term" value="P:S-adenosylmethionine biosynthetic process"/>
    <property type="evidence" value="ECO:0007669"/>
    <property type="project" value="UniProtKB-UniRule"/>
</dbReference>
<dbReference type="CDD" id="cd18079">
    <property type="entry name" value="S-AdoMet_synt"/>
    <property type="match status" value="1"/>
</dbReference>
<dbReference type="FunFam" id="3.30.300.10:FF:000001">
    <property type="entry name" value="S-adenosylmethionine synthase"/>
    <property type="match status" value="1"/>
</dbReference>
<dbReference type="FunFam" id="3.30.300.10:FF:000003">
    <property type="entry name" value="S-adenosylmethionine synthase"/>
    <property type="match status" value="1"/>
</dbReference>
<dbReference type="Gene3D" id="3.30.300.10">
    <property type="match status" value="3"/>
</dbReference>
<dbReference type="HAMAP" id="MF_00086">
    <property type="entry name" value="S_AdoMet_synth1"/>
    <property type="match status" value="1"/>
</dbReference>
<dbReference type="InterPro" id="IPR022631">
    <property type="entry name" value="ADOMET_SYNTHASE_CS"/>
</dbReference>
<dbReference type="InterPro" id="IPR022630">
    <property type="entry name" value="S-AdoMet_synt_C"/>
</dbReference>
<dbReference type="InterPro" id="IPR022629">
    <property type="entry name" value="S-AdoMet_synt_central"/>
</dbReference>
<dbReference type="InterPro" id="IPR022628">
    <property type="entry name" value="S-AdoMet_synt_N"/>
</dbReference>
<dbReference type="InterPro" id="IPR002133">
    <property type="entry name" value="S-AdoMet_synthetase"/>
</dbReference>
<dbReference type="InterPro" id="IPR022636">
    <property type="entry name" value="S-AdoMet_synthetase_sfam"/>
</dbReference>
<dbReference type="NCBIfam" id="TIGR01034">
    <property type="entry name" value="metK"/>
    <property type="match status" value="1"/>
</dbReference>
<dbReference type="PANTHER" id="PTHR11964">
    <property type="entry name" value="S-ADENOSYLMETHIONINE SYNTHETASE"/>
    <property type="match status" value="1"/>
</dbReference>
<dbReference type="Pfam" id="PF02773">
    <property type="entry name" value="S-AdoMet_synt_C"/>
    <property type="match status" value="1"/>
</dbReference>
<dbReference type="Pfam" id="PF02772">
    <property type="entry name" value="S-AdoMet_synt_M"/>
    <property type="match status" value="1"/>
</dbReference>
<dbReference type="Pfam" id="PF00438">
    <property type="entry name" value="S-AdoMet_synt_N"/>
    <property type="match status" value="1"/>
</dbReference>
<dbReference type="PIRSF" id="PIRSF000497">
    <property type="entry name" value="MAT"/>
    <property type="match status" value="1"/>
</dbReference>
<dbReference type="SUPFAM" id="SSF55973">
    <property type="entry name" value="S-adenosylmethionine synthetase"/>
    <property type="match status" value="3"/>
</dbReference>
<dbReference type="PROSITE" id="PS00376">
    <property type="entry name" value="ADOMET_SYNTHASE_1"/>
    <property type="match status" value="1"/>
</dbReference>
<dbReference type="PROSITE" id="PS00377">
    <property type="entry name" value="ADOMET_SYNTHASE_2"/>
    <property type="match status" value="1"/>
</dbReference>
<accession>A5F9H4</accession>
<accession>C3M4R3</accession>
<organism>
    <name type="scientific">Vibrio cholerae serotype O1 (strain ATCC 39541 / Classical Ogawa 395 / O395)</name>
    <dbReference type="NCBI Taxonomy" id="345073"/>
    <lineage>
        <taxon>Bacteria</taxon>
        <taxon>Pseudomonadati</taxon>
        <taxon>Pseudomonadota</taxon>
        <taxon>Gammaproteobacteria</taxon>
        <taxon>Vibrionales</taxon>
        <taxon>Vibrionaceae</taxon>
        <taxon>Vibrio</taxon>
    </lineage>
</organism>
<feature type="chain" id="PRO_1000071244" description="S-adenosylmethionine synthase">
    <location>
        <begin position="1"/>
        <end position="385"/>
    </location>
</feature>
<feature type="region of interest" description="Flexible loop" evidence="1">
    <location>
        <begin position="100"/>
        <end position="110"/>
    </location>
</feature>
<feature type="binding site" description="in other chain" evidence="1">
    <location>
        <position position="16"/>
    </location>
    <ligand>
        <name>ATP</name>
        <dbReference type="ChEBI" id="CHEBI:30616"/>
        <note>ligand shared between two neighboring subunits</note>
    </ligand>
</feature>
<feature type="binding site" evidence="1">
    <location>
        <position position="18"/>
    </location>
    <ligand>
        <name>Mg(2+)</name>
        <dbReference type="ChEBI" id="CHEBI:18420"/>
    </ligand>
</feature>
<feature type="binding site" evidence="1">
    <location>
        <position position="44"/>
    </location>
    <ligand>
        <name>K(+)</name>
        <dbReference type="ChEBI" id="CHEBI:29103"/>
    </ligand>
</feature>
<feature type="binding site" description="in other chain" evidence="1">
    <location>
        <position position="57"/>
    </location>
    <ligand>
        <name>L-methionine</name>
        <dbReference type="ChEBI" id="CHEBI:57844"/>
        <note>ligand shared between two neighboring subunits</note>
    </ligand>
</feature>
<feature type="binding site" description="in other chain" evidence="1">
    <location>
        <position position="100"/>
    </location>
    <ligand>
        <name>L-methionine</name>
        <dbReference type="ChEBI" id="CHEBI:57844"/>
        <note>ligand shared between two neighboring subunits</note>
    </ligand>
</feature>
<feature type="binding site" description="in other chain" evidence="1">
    <location>
        <begin position="165"/>
        <end position="167"/>
    </location>
    <ligand>
        <name>ATP</name>
        <dbReference type="ChEBI" id="CHEBI:30616"/>
        <note>ligand shared between two neighboring subunits</note>
    </ligand>
</feature>
<feature type="binding site" description="in other chain" evidence="1">
    <location>
        <begin position="231"/>
        <end position="232"/>
    </location>
    <ligand>
        <name>ATP</name>
        <dbReference type="ChEBI" id="CHEBI:30616"/>
        <note>ligand shared between two neighboring subunits</note>
    </ligand>
</feature>
<feature type="binding site" evidence="1">
    <location>
        <position position="240"/>
    </location>
    <ligand>
        <name>ATP</name>
        <dbReference type="ChEBI" id="CHEBI:30616"/>
        <note>ligand shared between two neighboring subunits</note>
    </ligand>
</feature>
<feature type="binding site" evidence="1">
    <location>
        <position position="240"/>
    </location>
    <ligand>
        <name>L-methionine</name>
        <dbReference type="ChEBI" id="CHEBI:57844"/>
        <note>ligand shared between two neighboring subunits</note>
    </ligand>
</feature>
<feature type="binding site" description="in other chain" evidence="1">
    <location>
        <begin position="246"/>
        <end position="247"/>
    </location>
    <ligand>
        <name>ATP</name>
        <dbReference type="ChEBI" id="CHEBI:30616"/>
        <note>ligand shared between two neighboring subunits</note>
    </ligand>
</feature>
<feature type="binding site" evidence="1">
    <location>
        <position position="263"/>
    </location>
    <ligand>
        <name>ATP</name>
        <dbReference type="ChEBI" id="CHEBI:30616"/>
        <note>ligand shared between two neighboring subunits</note>
    </ligand>
</feature>
<feature type="binding site" evidence="1">
    <location>
        <position position="267"/>
    </location>
    <ligand>
        <name>ATP</name>
        <dbReference type="ChEBI" id="CHEBI:30616"/>
        <note>ligand shared between two neighboring subunits</note>
    </ligand>
</feature>
<feature type="binding site" description="in other chain" evidence="1">
    <location>
        <position position="271"/>
    </location>
    <ligand>
        <name>L-methionine</name>
        <dbReference type="ChEBI" id="CHEBI:57844"/>
        <note>ligand shared between two neighboring subunits</note>
    </ligand>
</feature>
<proteinExistence type="inferred from homology"/>
<protein>
    <recommendedName>
        <fullName evidence="1">S-adenosylmethionine synthase</fullName>
        <shortName evidence="1">AdoMet synthase</shortName>
        <ecNumber evidence="1">2.5.1.6</ecNumber>
    </recommendedName>
    <alternativeName>
        <fullName evidence="1">MAT</fullName>
    </alternativeName>
    <alternativeName>
        <fullName evidence="1">Methionine adenosyltransferase</fullName>
    </alternativeName>
</protein>
<comment type="function">
    <text evidence="1">Catalyzes the formation of S-adenosylmethionine (AdoMet) from methionine and ATP. The overall synthetic reaction is composed of two sequential steps, AdoMet formation and the subsequent tripolyphosphate hydrolysis which occurs prior to release of AdoMet from the enzyme.</text>
</comment>
<comment type="catalytic activity">
    <reaction evidence="1">
        <text>L-methionine + ATP + H2O = S-adenosyl-L-methionine + phosphate + diphosphate</text>
        <dbReference type="Rhea" id="RHEA:21080"/>
        <dbReference type="ChEBI" id="CHEBI:15377"/>
        <dbReference type="ChEBI" id="CHEBI:30616"/>
        <dbReference type="ChEBI" id="CHEBI:33019"/>
        <dbReference type="ChEBI" id="CHEBI:43474"/>
        <dbReference type="ChEBI" id="CHEBI:57844"/>
        <dbReference type="ChEBI" id="CHEBI:59789"/>
        <dbReference type="EC" id="2.5.1.6"/>
    </reaction>
</comment>
<comment type="cofactor">
    <cofactor evidence="1">
        <name>Mg(2+)</name>
        <dbReference type="ChEBI" id="CHEBI:18420"/>
    </cofactor>
    <text evidence="1">Binds 2 divalent ions per subunit.</text>
</comment>
<comment type="cofactor">
    <cofactor evidence="1">
        <name>K(+)</name>
        <dbReference type="ChEBI" id="CHEBI:29103"/>
    </cofactor>
    <text evidence="1">Binds 1 potassium ion per subunit.</text>
</comment>
<comment type="pathway">
    <text evidence="1">Amino-acid biosynthesis; S-adenosyl-L-methionine biosynthesis; S-adenosyl-L-methionine from L-methionine: step 1/1.</text>
</comment>
<comment type="subunit">
    <text evidence="1">Homotetramer; dimer of dimers.</text>
</comment>
<comment type="subcellular location">
    <subcellularLocation>
        <location evidence="1">Cytoplasm</location>
    </subcellularLocation>
</comment>
<comment type="similarity">
    <text evidence="1">Belongs to the AdoMet synthase family.</text>
</comment>
<gene>
    <name evidence="1" type="primary">metK</name>
    <name type="ordered locus">VC0395_A0024</name>
    <name type="ordered locus">VC395_0516</name>
</gene>
<reference key="1">
    <citation type="submission" date="2007-03" db="EMBL/GenBank/DDBJ databases">
        <authorList>
            <person name="Heidelberg J."/>
        </authorList>
    </citation>
    <scope>NUCLEOTIDE SEQUENCE [LARGE SCALE GENOMIC DNA]</scope>
    <source>
        <strain>ATCC 39541 / Classical Ogawa 395 / O395</strain>
    </source>
</reference>
<reference key="2">
    <citation type="journal article" date="2008" name="PLoS ONE">
        <title>A recalibrated molecular clock and independent origins for the cholera pandemic clones.</title>
        <authorList>
            <person name="Feng L."/>
            <person name="Reeves P.R."/>
            <person name="Lan R."/>
            <person name="Ren Y."/>
            <person name="Gao C."/>
            <person name="Zhou Z."/>
            <person name="Ren Y."/>
            <person name="Cheng J."/>
            <person name="Wang W."/>
            <person name="Wang J."/>
            <person name="Qian W."/>
            <person name="Li D."/>
            <person name="Wang L."/>
        </authorList>
    </citation>
    <scope>NUCLEOTIDE SEQUENCE [LARGE SCALE GENOMIC DNA]</scope>
    <source>
        <strain>ATCC 39541 / Classical Ogawa 395 / O395</strain>
    </source>
</reference>
<sequence length="385" mass="42127">MAIKHLFTSESVSEGHPDKIADQISDAVLDAIFEQDPKARVACETYVKTGMVMVGGEITTSAWVDIEEITRQTVREIGYVHSDMGFDANSCAVLNTIGKQSPDINQGVDKADPKEQGAGDQGIMFGYATNETEVLMPAPITYAHRLMQRQAEVRKNGTLPWLRPDAKSQVTFQYDQGKIVGIDAVVLSTQHSDSISTADLREAVMEEIIKPVLPAEWLSKETKYFINPTGRFVIGGPMGDCGLTGRKIIVDTYGGAARHGGGAFSGKDPSKVDRSAAYAARYVAKNIVAAGMADRCEIQLSYAIGVADPTSIMVETFGTEKVSQEIIIEAVRQFFDLRPYGLQEMLNLLQPIYKKTAAYGHFGREEFPWEATDKAALLRDFAGLK</sequence>
<name>METK_VIBC3</name>
<keyword id="KW-0067">ATP-binding</keyword>
<keyword id="KW-0963">Cytoplasm</keyword>
<keyword id="KW-0460">Magnesium</keyword>
<keyword id="KW-0479">Metal-binding</keyword>
<keyword id="KW-0547">Nucleotide-binding</keyword>
<keyword id="KW-0554">One-carbon metabolism</keyword>
<keyword id="KW-0630">Potassium</keyword>
<keyword id="KW-0808">Transferase</keyword>